<proteinExistence type="inferred from homology"/>
<reference key="1">
    <citation type="journal article" date="2007" name="Science">
        <title>Genome sequence of Aedes aegypti, a major arbovirus vector.</title>
        <authorList>
            <person name="Nene V."/>
            <person name="Wortman J.R."/>
            <person name="Lawson D."/>
            <person name="Haas B.J."/>
            <person name="Kodira C.D."/>
            <person name="Tu Z.J."/>
            <person name="Loftus B.J."/>
            <person name="Xi Z."/>
            <person name="Megy K."/>
            <person name="Grabherr M."/>
            <person name="Ren Q."/>
            <person name="Zdobnov E.M."/>
            <person name="Lobo N.F."/>
            <person name="Campbell K.S."/>
            <person name="Brown S.E."/>
            <person name="Bonaldo M.F."/>
            <person name="Zhu J."/>
            <person name="Sinkins S.P."/>
            <person name="Hogenkamp D.G."/>
            <person name="Amedeo P."/>
            <person name="Arensburger P."/>
            <person name="Atkinson P.W."/>
            <person name="Bidwell S.L."/>
            <person name="Biedler J."/>
            <person name="Birney E."/>
            <person name="Bruggner R.V."/>
            <person name="Costas J."/>
            <person name="Coy M.R."/>
            <person name="Crabtree J."/>
            <person name="Crawford M."/>
            <person name="DeBruyn B."/>
            <person name="DeCaprio D."/>
            <person name="Eiglmeier K."/>
            <person name="Eisenstadt E."/>
            <person name="El-Dorry H."/>
            <person name="Gelbart W.M."/>
            <person name="Gomes S.L."/>
            <person name="Hammond M."/>
            <person name="Hannick L.I."/>
            <person name="Hogan J.R."/>
            <person name="Holmes M.H."/>
            <person name="Jaffe D."/>
            <person name="Johnston S.J."/>
            <person name="Kennedy R.C."/>
            <person name="Koo H."/>
            <person name="Kravitz S."/>
            <person name="Kriventseva E.V."/>
            <person name="Kulp D."/>
            <person name="Labutti K."/>
            <person name="Lee E."/>
            <person name="Li S."/>
            <person name="Lovin D.D."/>
            <person name="Mao C."/>
            <person name="Mauceli E."/>
            <person name="Menck C.F."/>
            <person name="Miller J.R."/>
            <person name="Montgomery P."/>
            <person name="Mori A."/>
            <person name="Nascimento A.L."/>
            <person name="Naveira H.F."/>
            <person name="Nusbaum C."/>
            <person name="O'Leary S.B."/>
            <person name="Orvis J."/>
            <person name="Pertea M."/>
            <person name="Quesneville H."/>
            <person name="Reidenbach K.R."/>
            <person name="Rogers Y.-H.C."/>
            <person name="Roth C.W."/>
            <person name="Schneider J.R."/>
            <person name="Schatz M."/>
            <person name="Shumway M."/>
            <person name="Stanke M."/>
            <person name="Stinson E.O."/>
            <person name="Tubio J.M.C."/>
            <person name="Vanzee J.P."/>
            <person name="Verjovski-Almeida S."/>
            <person name="Werner D."/>
            <person name="White O.R."/>
            <person name="Wyder S."/>
            <person name="Zeng Q."/>
            <person name="Zhao Q."/>
            <person name="Zhao Y."/>
            <person name="Hill C.A."/>
            <person name="Raikhel A.S."/>
            <person name="Soares M.B."/>
            <person name="Knudson D.L."/>
            <person name="Lee N.H."/>
            <person name="Galagan J."/>
            <person name="Salzberg S.L."/>
            <person name="Paulsen I.T."/>
            <person name="Dimopoulos G."/>
            <person name="Collins F.H."/>
            <person name="Bruce B."/>
            <person name="Fraser-Liggett C.M."/>
            <person name="Severson D.W."/>
        </authorList>
    </citation>
    <scope>NUCLEOTIDE SEQUENCE [LARGE SCALE GENOMIC DNA]</scope>
    <source>
        <strain>LVPib12</strain>
    </source>
</reference>
<evidence type="ECO:0000255" key="1">
    <source>
        <dbReference type="HAMAP-Rule" id="MF_03052"/>
    </source>
</evidence>
<dbReference type="EC" id="2.8.1.12" evidence="1"/>
<dbReference type="EMBL" id="CH477455">
    <property type="protein sequence ID" value="EAT40643.1"/>
    <property type="molecule type" value="Genomic_DNA"/>
</dbReference>
<dbReference type="RefSeq" id="XP_001658545.1">
    <property type="nucleotide sequence ID" value="XM_001658495.1"/>
</dbReference>
<dbReference type="SMR" id="Q171H3"/>
<dbReference type="STRING" id="7159.Q171H3"/>
<dbReference type="PaxDb" id="7159-AAEL007640-PA"/>
<dbReference type="eggNOG" id="KOG3307">
    <property type="taxonomic scope" value="Eukaryota"/>
</dbReference>
<dbReference type="HOGENOM" id="CLU_089568_0_1_1"/>
<dbReference type="InParanoid" id="Q171H3"/>
<dbReference type="OMA" id="GEICLFV"/>
<dbReference type="PhylomeDB" id="Q171H3"/>
<dbReference type="UniPathway" id="UPA00344"/>
<dbReference type="Proteomes" id="UP000008820">
    <property type="component" value="Unassembled WGS sequence"/>
</dbReference>
<dbReference type="Proteomes" id="UP000682892">
    <property type="component" value="Unassembled WGS sequence"/>
</dbReference>
<dbReference type="GO" id="GO:1990140">
    <property type="term" value="C:molybdopterin synthase complex"/>
    <property type="evidence" value="ECO:0007669"/>
    <property type="project" value="UniProtKB-UniRule"/>
</dbReference>
<dbReference type="GO" id="GO:0030366">
    <property type="term" value="F:molybdopterin synthase activity"/>
    <property type="evidence" value="ECO:0007669"/>
    <property type="project" value="UniProtKB-UniRule"/>
</dbReference>
<dbReference type="GO" id="GO:0006777">
    <property type="term" value="P:Mo-molybdopterin cofactor biosynthetic process"/>
    <property type="evidence" value="ECO:0007669"/>
    <property type="project" value="UniProtKB-UniRule"/>
</dbReference>
<dbReference type="CDD" id="cd00756">
    <property type="entry name" value="MoaE"/>
    <property type="match status" value="1"/>
</dbReference>
<dbReference type="FunFam" id="3.90.1170.40:FF:000002">
    <property type="entry name" value="Molybdopterin synthase catalytic subunit"/>
    <property type="match status" value="1"/>
</dbReference>
<dbReference type="Gene3D" id="3.90.1170.40">
    <property type="entry name" value="Molybdopterin biosynthesis MoaE subunit"/>
    <property type="match status" value="1"/>
</dbReference>
<dbReference type="HAMAP" id="MF_03052">
    <property type="entry name" value="MOC2B"/>
    <property type="match status" value="1"/>
</dbReference>
<dbReference type="InterPro" id="IPR036563">
    <property type="entry name" value="MoaE_sf"/>
</dbReference>
<dbReference type="InterPro" id="IPR028888">
    <property type="entry name" value="MOCS2B_euk"/>
</dbReference>
<dbReference type="InterPro" id="IPR003448">
    <property type="entry name" value="Mopterin_biosynth_MoaE"/>
</dbReference>
<dbReference type="PANTHER" id="PTHR23404">
    <property type="entry name" value="MOLYBDOPTERIN SYNTHASE RELATED"/>
    <property type="match status" value="1"/>
</dbReference>
<dbReference type="Pfam" id="PF02391">
    <property type="entry name" value="MoaE"/>
    <property type="match status" value="1"/>
</dbReference>
<dbReference type="SUPFAM" id="SSF54690">
    <property type="entry name" value="Molybdopterin synthase subunit MoaE"/>
    <property type="match status" value="1"/>
</dbReference>
<accession>Q171H3</accession>
<name>MO2B1_AEDAE</name>
<gene>
    <name evidence="1" type="primary">Mocs2-1</name>
    <name type="ORF">AAEL007640</name>
</gene>
<protein>
    <recommendedName>
        <fullName evidence="1">Molybdopterin synthase catalytic subunit 1</fullName>
        <ecNumber evidence="1">2.8.1.12</ecNumber>
    </recommendedName>
    <alternativeName>
        <fullName evidence="1">Molybdenum cofactor synthesis protein 2 large subunit 1</fullName>
    </alternativeName>
    <alternativeName>
        <fullName evidence="1">Molybdenum cofactor synthesis protein 2B 1</fullName>
        <shortName evidence="1">MOCS2B 1</shortName>
    </alternativeName>
</protein>
<keyword id="KW-0963">Cytoplasm</keyword>
<keyword id="KW-0501">Molybdenum cofactor biosynthesis</keyword>
<keyword id="KW-1185">Reference proteome</keyword>
<keyword id="KW-0808">Transferase</keyword>
<feature type="chain" id="PRO_0000369329" description="Molybdopterin synthase catalytic subunit 1">
    <location>
        <begin position="1"/>
        <end position="155"/>
    </location>
</feature>
<feature type="binding site" evidence="1">
    <location>
        <begin position="101"/>
        <end position="102"/>
    </location>
    <ligand>
        <name>substrate</name>
    </ligand>
</feature>
<feature type="binding site" evidence="1">
    <location>
        <position position="117"/>
    </location>
    <ligand>
        <name>substrate</name>
    </ligand>
</feature>
<feature type="binding site" evidence="1">
    <location>
        <begin position="124"/>
        <end position="126"/>
    </location>
    <ligand>
        <name>substrate</name>
    </ligand>
</feature>
<sequence length="155" mass="17623">MNYLKLTFDKLEVGEINDLVAHESCGAISLFVGTTRDNFDGKTVVLLEYEAYEAMALKTMNQICEELRARWPDIKHIGIHHRLGTVPVKEASVVIAVSSPHRKSSLEAVHFAIDELKKSVPVWKKEQYADGEGCSEWKENKECSWSKSHRDNHIL</sequence>
<organism>
    <name type="scientific">Aedes aegypti</name>
    <name type="common">Yellowfever mosquito</name>
    <name type="synonym">Culex aegypti</name>
    <dbReference type="NCBI Taxonomy" id="7159"/>
    <lineage>
        <taxon>Eukaryota</taxon>
        <taxon>Metazoa</taxon>
        <taxon>Ecdysozoa</taxon>
        <taxon>Arthropoda</taxon>
        <taxon>Hexapoda</taxon>
        <taxon>Insecta</taxon>
        <taxon>Pterygota</taxon>
        <taxon>Neoptera</taxon>
        <taxon>Endopterygota</taxon>
        <taxon>Diptera</taxon>
        <taxon>Nematocera</taxon>
        <taxon>Culicoidea</taxon>
        <taxon>Culicidae</taxon>
        <taxon>Culicinae</taxon>
        <taxon>Aedini</taxon>
        <taxon>Aedes</taxon>
        <taxon>Stegomyia</taxon>
    </lineage>
</organism>
<comment type="function">
    <text evidence="1">Catalytic subunit of the molybdopterin synthase complex, a complex that catalyzes the conversion of precursor Z into molybdopterin. Acts by mediating the incorporation of 2 sulfur atoms from thiocarboxylated MOCS2A into precursor Z to generate a dithiolene group.</text>
</comment>
<comment type="catalytic activity">
    <reaction evidence="1">
        <text>2 [molybdopterin-synthase sulfur-carrier protein]-C-terminal-Gly-aminoethanethioate + cyclic pyranopterin phosphate + H2O = molybdopterin + 2 [molybdopterin-synthase sulfur-carrier protein]-C-terminal Gly-Gly + 2 H(+)</text>
        <dbReference type="Rhea" id="RHEA:26333"/>
        <dbReference type="Rhea" id="RHEA-COMP:12202"/>
        <dbReference type="Rhea" id="RHEA-COMP:19907"/>
        <dbReference type="ChEBI" id="CHEBI:15377"/>
        <dbReference type="ChEBI" id="CHEBI:15378"/>
        <dbReference type="ChEBI" id="CHEBI:58698"/>
        <dbReference type="ChEBI" id="CHEBI:59648"/>
        <dbReference type="ChEBI" id="CHEBI:90778"/>
        <dbReference type="ChEBI" id="CHEBI:232372"/>
        <dbReference type="EC" id="2.8.1.12"/>
    </reaction>
</comment>
<comment type="pathway">
    <text evidence="1">Cofactor biosynthesis; molybdopterin biosynthesis.</text>
</comment>
<comment type="subunit">
    <text evidence="1">Heterotetramer; composed of 2 small (MOCS2A) and 2 large (MOCS2B) subunits.</text>
</comment>
<comment type="subcellular location">
    <subcellularLocation>
        <location evidence="1">Cytoplasm</location>
    </subcellularLocation>
</comment>
<comment type="miscellaneous">
    <text>This protein is produced by a bicistronic gene which also produces the large subunit (MOCS2A).</text>
</comment>
<comment type="similarity">
    <text evidence="1">Belongs to the MoaE family. MOCS2B subfamily.</text>
</comment>